<evidence type="ECO:0000255" key="1">
    <source>
        <dbReference type="HAMAP-Rule" id="MF_01572"/>
    </source>
</evidence>
<protein>
    <recommendedName>
        <fullName evidence="1">UPF0397 protein SAUSA300_2618</fullName>
    </recommendedName>
</protein>
<gene>
    <name type="ordered locus">SAUSA300_2618</name>
</gene>
<dbReference type="EMBL" id="CP000255">
    <property type="protein sequence ID" value="ABD21117.1"/>
    <property type="molecule type" value="Genomic_DNA"/>
</dbReference>
<dbReference type="RefSeq" id="WP_000743717.1">
    <property type="nucleotide sequence ID" value="NZ_CP027476.1"/>
</dbReference>
<dbReference type="KEGG" id="saa:SAUSA300_2618"/>
<dbReference type="HOGENOM" id="CLU_120023_0_0_9"/>
<dbReference type="OMA" id="WWSWVIA"/>
<dbReference type="Proteomes" id="UP000001939">
    <property type="component" value="Chromosome"/>
</dbReference>
<dbReference type="GO" id="GO:0005886">
    <property type="term" value="C:plasma membrane"/>
    <property type="evidence" value="ECO:0007669"/>
    <property type="project" value="UniProtKB-SubCell"/>
</dbReference>
<dbReference type="Gene3D" id="1.10.1760.20">
    <property type="match status" value="1"/>
</dbReference>
<dbReference type="HAMAP" id="MF_01572">
    <property type="entry name" value="UPF0397"/>
    <property type="match status" value="1"/>
</dbReference>
<dbReference type="InterPro" id="IPR009825">
    <property type="entry name" value="ECF_substrate-spec-like"/>
</dbReference>
<dbReference type="InterPro" id="IPR022914">
    <property type="entry name" value="UPF0397"/>
</dbReference>
<dbReference type="NCBIfam" id="NF010182">
    <property type="entry name" value="PRK13661.1"/>
    <property type="match status" value="1"/>
</dbReference>
<dbReference type="PANTHER" id="PTHR37815">
    <property type="entry name" value="UPF0397 PROTEIN BC_2624-RELATED"/>
    <property type="match status" value="1"/>
</dbReference>
<dbReference type="PANTHER" id="PTHR37815:SF3">
    <property type="entry name" value="UPF0397 PROTEIN SPR0429"/>
    <property type="match status" value="1"/>
</dbReference>
<dbReference type="Pfam" id="PF07155">
    <property type="entry name" value="ECF-ribofla_trS"/>
    <property type="match status" value="1"/>
</dbReference>
<feature type="chain" id="PRO_0000260801" description="UPF0397 protein SAUSA300_2618">
    <location>
        <begin position="1"/>
        <end position="184"/>
    </location>
</feature>
<feature type="transmembrane region" description="Helical" evidence="1">
    <location>
        <begin position="11"/>
        <end position="31"/>
    </location>
</feature>
<feature type="transmembrane region" description="Helical" evidence="1">
    <location>
        <begin position="44"/>
        <end position="64"/>
    </location>
</feature>
<feature type="transmembrane region" description="Helical" evidence="1">
    <location>
        <begin position="77"/>
        <end position="97"/>
    </location>
</feature>
<feature type="transmembrane region" description="Helical" evidence="1">
    <location>
        <begin position="116"/>
        <end position="136"/>
    </location>
</feature>
<feature type="transmembrane region" description="Helical" evidence="1">
    <location>
        <begin position="148"/>
        <end position="168"/>
    </location>
</feature>
<keyword id="KW-1003">Cell membrane</keyword>
<keyword id="KW-0472">Membrane</keyword>
<keyword id="KW-0812">Transmembrane</keyword>
<keyword id="KW-1133">Transmembrane helix</keyword>
<name>Y2618_STAA3</name>
<reference key="1">
    <citation type="journal article" date="2006" name="Lancet">
        <title>Complete genome sequence of USA300, an epidemic clone of community-acquired meticillin-resistant Staphylococcus aureus.</title>
        <authorList>
            <person name="Diep B.A."/>
            <person name="Gill S.R."/>
            <person name="Chang R.F."/>
            <person name="Phan T.H."/>
            <person name="Chen J.H."/>
            <person name="Davidson M.G."/>
            <person name="Lin F."/>
            <person name="Lin J."/>
            <person name="Carleton H.A."/>
            <person name="Mongodin E.F."/>
            <person name="Sensabaugh G.F."/>
            <person name="Perdreau-Remington F."/>
        </authorList>
    </citation>
    <scope>NUCLEOTIDE SEQUENCE [LARGE SCALE GENOMIC DNA]</scope>
    <source>
        <strain>USA300</strain>
    </source>
</reference>
<comment type="subcellular location">
    <subcellularLocation>
        <location evidence="1">Cell membrane</location>
        <topology evidence="1">Multi-pass membrane protein</topology>
    </subcellularLocation>
</comment>
<comment type="similarity">
    <text evidence="1">Belongs to the UPF0397 family.</text>
</comment>
<proteinExistence type="inferred from homology"/>
<sequence>MKKQDISVKTVVAIGIGAAVFVILGRFVVIPTGFPNTNIETSYAFLALISAIFGPFAGLMTGLVGHAIKDFTTYGSAWWSWVICSGIIGCLYGWIGLKLNLSSGRFSRKSMVYFNIGQIIANIICWALIAPTLDILIYNEPANKVYTQGVISAVLNIISVGIIGTILLKAYASSQIKKGSLRKE</sequence>
<accession>Q2FDH6</accession>
<organism>
    <name type="scientific">Staphylococcus aureus (strain USA300)</name>
    <dbReference type="NCBI Taxonomy" id="367830"/>
    <lineage>
        <taxon>Bacteria</taxon>
        <taxon>Bacillati</taxon>
        <taxon>Bacillota</taxon>
        <taxon>Bacilli</taxon>
        <taxon>Bacillales</taxon>
        <taxon>Staphylococcaceae</taxon>
        <taxon>Staphylococcus</taxon>
    </lineage>
</organism>